<sequence>MLPRLGGPALPLLLPSLLLLLLLGAGGCGPGVRAEVLFRCPPCTPERLAACGPPPDAPCAELVREPGCGCCSVCARQEGEACGVYIPRCAQTLRCYPNPGSELPLKALVTGAGTCEKRRVGTTPQQVADSDDDHSEGGLVENHVDGTMNMLGGGSSAGRKPLKSGMKELAVFREKVNEQHRQMGKGAKHLSLEEPKKLRPPPARTPCQQELDQVLERISTMRLPDDRGPLEHLYSLHIPNCDKHGRYNLKQCKMSLNGQRGECWCVNPNTGKPIQGAPTIRGDPECHLFYNEQQETGGAHAQSVQ</sequence>
<comment type="function">
    <text evidence="2 5 6">Multifunctional protein that plays a critical role in regulating the availability of IGFs such as IGF1 and IGF2 to their receptors and thereby regulates IGF-mediated cellular processes including proliferation, differentiation, and apoptosis in a cell-type specific manner (PubMed:18276763). Functions coordinately with receptor protein tyrosine phosphatase beta/PTPRB and the IGF1 receptor to regulate IGF1-mediated signaling by stimulating the phosphorylation of PTEN leading to its inactivation and AKT1 activation (PubMed:26773517). Plays a positive role in cell migration via interaction with integrin alpha5/ITGA5 through an RGD motif. Additionally, interaction with ITGA5/ITGB1 enhances the adhesion of endothelial progenitor cells to endothelial cells. Upon mitochondrial damage, facilitates apoptosis with ITGA5 of podocytes, and then activates the phosphorylation of focal adhesion kinase (FAK)-mediated mitochondrial injury.</text>
</comment>
<comment type="subunit">
    <text evidence="2 6">Interacts with IGF1. Interacts with IGF2. Interacts (via RGD motif) with integrin alpha5/ITGA5; this interaction induces cell migration, adhesion or apoptosis according to the context. Interacts with PTPRB; this interaction leads to PTPRB dimerization and inactivation (PubMed:26773517).</text>
</comment>
<comment type="subcellular location">
    <subcellularLocation>
        <location evidence="2">Secreted</location>
    </subcellularLocation>
</comment>
<comment type="tissue specificity">
    <text evidence="7">Highly expressed in adult liver, but also in kidney, lung, brain, spleen, testis and ovary.</text>
</comment>
<comment type="developmental stage">
    <text evidence="7">Expressed embryos at day 11.5. Also expressed in fetal livers with expression increasing dramatically after birth. Expression decreases only slightly after postnatal day 3 and remains abundant thereafter.</text>
</comment>
<comment type="domain">
    <text evidence="1">The C-terminus is required for IGF-binding and growth inhibition.</text>
</comment>
<comment type="PTM">
    <text evidence="2">Cleaved by MMP9 leading to release of free IGF2 from IGFBP2-IGF2 complex, which contributes to enhance the motility and the growth of astrocytes.</text>
</comment>
<comment type="PTM">
    <text evidence="2">O-glycosylated.</text>
</comment>
<comment type="disruption phenotype">
    <text evidence="5">Igfbp2-deletion mice display no difference in the rate of body weight gain or absolute body weight at 8 weeks of age compared with wild-type littermates. However, at 16 weeks of age, male are mildly heavier than wild-type mice due to greater lipid mass.</text>
</comment>
<dbReference type="EMBL" id="L05439">
    <property type="protein sequence ID" value="AAB60709.1"/>
    <property type="molecule type" value="Genomic_DNA"/>
</dbReference>
<dbReference type="EMBL" id="L05436">
    <property type="protein sequence ID" value="AAB60709.1"/>
    <property type="status" value="JOINED"/>
    <property type="molecule type" value="Genomic_DNA"/>
</dbReference>
<dbReference type="EMBL" id="L05437">
    <property type="protein sequence ID" value="AAB60709.1"/>
    <property type="status" value="JOINED"/>
    <property type="molecule type" value="Genomic_DNA"/>
</dbReference>
<dbReference type="EMBL" id="L05438">
    <property type="protein sequence ID" value="AAB60709.1"/>
    <property type="status" value="JOINED"/>
    <property type="molecule type" value="Genomic_DNA"/>
</dbReference>
<dbReference type="EMBL" id="X81580">
    <property type="protein sequence ID" value="CAA57270.1"/>
    <property type="molecule type" value="mRNA"/>
</dbReference>
<dbReference type="EMBL" id="CH466548">
    <property type="protein sequence ID" value="EDL00293.1"/>
    <property type="molecule type" value="Genomic_DNA"/>
</dbReference>
<dbReference type="EMBL" id="BC012724">
    <property type="protein sequence ID" value="AAH12724.1"/>
    <property type="molecule type" value="mRNA"/>
</dbReference>
<dbReference type="EMBL" id="BC054473">
    <property type="protein sequence ID" value="AAH54473.1"/>
    <property type="molecule type" value="mRNA"/>
</dbReference>
<dbReference type="CCDS" id="CCDS15036.1"/>
<dbReference type="PIR" id="I48601">
    <property type="entry name" value="I48601"/>
</dbReference>
<dbReference type="PIR" id="JN0508">
    <property type="entry name" value="JN0508"/>
</dbReference>
<dbReference type="RefSeq" id="NP_032368.2">
    <property type="nucleotide sequence ID" value="NM_008342.3"/>
</dbReference>
<dbReference type="SMR" id="P47877"/>
<dbReference type="BioGRID" id="200554">
    <property type="interactions" value="2"/>
</dbReference>
<dbReference type="DIP" id="DIP-60632N"/>
<dbReference type="FunCoup" id="P47877">
    <property type="interactions" value="120"/>
</dbReference>
<dbReference type="IntAct" id="P47877">
    <property type="interactions" value="2"/>
</dbReference>
<dbReference type="STRING" id="10090.ENSMUSP00000046610"/>
<dbReference type="MEROPS" id="I31.953"/>
<dbReference type="iPTMnet" id="P47877"/>
<dbReference type="PhosphoSitePlus" id="P47877"/>
<dbReference type="CPTAC" id="non-CPTAC-3985"/>
<dbReference type="jPOST" id="P47877"/>
<dbReference type="PaxDb" id="10090-ENSMUSP00000046610"/>
<dbReference type="PeptideAtlas" id="P47877"/>
<dbReference type="ProteomicsDB" id="267080"/>
<dbReference type="Antibodypedia" id="11351">
    <property type="antibodies" value="465 antibodies from 37 providers"/>
</dbReference>
<dbReference type="DNASU" id="16008"/>
<dbReference type="Ensembl" id="ENSMUST00000047328.11">
    <property type="protein sequence ID" value="ENSMUSP00000046610.5"/>
    <property type="gene ID" value="ENSMUSG00000039323.19"/>
</dbReference>
<dbReference type="GeneID" id="16008"/>
<dbReference type="KEGG" id="mmu:16008"/>
<dbReference type="UCSC" id="uc007bkw.2">
    <property type="organism name" value="mouse"/>
</dbReference>
<dbReference type="AGR" id="MGI:96437"/>
<dbReference type="CTD" id="3485"/>
<dbReference type="MGI" id="MGI:96437">
    <property type="gene designation" value="Igfbp2"/>
</dbReference>
<dbReference type="VEuPathDB" id="HostDB:ENSMUSG00000039323"/>
<dbReference type="eggNOG" id="ENOG502QRWQ">
    <property type="taxonomic scope" value="Eukaryota"/>
</dbReference>
<dbReference type="GeneTree" id="ENSGT00940000158542"/>
<dbReference type="HOGENOM" id="CLU_070833_3_0_1"/>
<dbReference type="InParanoid" id="P47877"/>
<dbReference type="OMA" id="NLMPITM"/>
<dbReference type="OrthoDB" id="9984807at2759"/>
<dbReference type="PhylomeDB" id="P47877"/>
<dbReference type="TreeFam" id="TF331211"/>
<dbReference type="Reactome" id="R-MMU-381426">
    <property type="pathway name" value="Regulation of Insulin-like Growth Factor (IGF) transport and uptake by Insulin-like Growth Factor Binding Proteins (IGFBPs)"/>
</dbReference>
<dbReference type="BioGRID-ORCS" id="16008">
    <property type="hits" value="2 hits in 79 CRISPR screens"/>
</dbReference>
<dbReference type="ChiTaRS" id="Igfbp2">
    <property type="organism name" value="mouse"/>
</dbReference>
<dbReference type="PRO" id="PR:P47877"/>
<dbReference type="Proteomes" id="UP000000589">
    <property type="component" value="Chromosome 1"/>
</dbReference>
<dbReference type="RNAct" id="P47877">
    <property type="molecule type" value="protein"/>
</dbReference>
<dbReference type="Bgee" id="ENSMUSG00000039323">
    <property type="expression patterns" value="Expressed in choroid plexus of fourth ventricle and 281 other cell types or tissues"/>
</dbReference>
<dbReference type="ExpressionAtlas" id="P47877">
    <property type="expression patterns" value="baseline and differential"/>
</dbReference>
<dbReference type="GO" id="GO:0016324">
    <property type="term" value="C:apical plasma membrane"/>
    <property type="evidence" value="ECO:0007669"/>
    <property type="project" value="Ensembl"/>
</dbReference>
<dbReference type="GO" id="GO:0005576">
    <property type="term" value="C:extracellular region"/>
    <property type="evidence" value="ECO:0000250"/>
    <property type="project" value="UniProtKB"/>
</dbReference>
<dbReference type="GO" id="GO:0005615">
    <property type="term" value="C:extracellular space"/>
    <property type="evidence" value="ECO:0000314"/>
    <property type="project" value="MGI"/>
</dbReference>
<dbReference type="GO" id="GO:0005520">
    <property type="term" value="F:insulin-like growth factor binding"/>
    <property type="evidence" value="ECO:0000353"/>
    <property type="project" value="MGI"/>
</dbReference>
<dbReference type="GO" id="GO:0031994">
    <property type="term" value="F:insulin-like growth factor I binding"/>
    <property type="evidence" value="ECO:0000250"/>
    <property type="project" value="UniProtKB"/>
</dbReference>
<dbReference type="GO" id="GO:0031995">
    <property type="term" value="F:insulin-like growth factor II binding"/>
    <property type="evidence" value="ECO:0000250"/>
    <property type="project" value="UniProtKB"/>
</dbReference>
<dbReference type="GO" id="GO:0004864">
    <property type="term" value="F:protein phosphatase inhibitor activity"/>
    <property type="evidence" value="ECO:0007669"/>
    <property type="project" value="Ensembl"/>
</dbReference>
<dbReference type="GO" id="GO:0141069">
    <property type="term" value="F:receptor ligand inhibitor activity"/>
    <property type="evidence" value="ECO:0007669"/>
    <property type="project" value="Ensembl"/>
</dbReference>
<dbReference type="GO" id="GO:0030547">
    <property type="term" value="F:signaling receptor inhibitor activity"/>
    <property type="evidence" value="ECO:0007669"/>
    <property type="project" value="Ensembl"/>
</dbReference>
<dbReference type="GO" id="GO:0032870">
    <property type="term" value="P:cellular response to hormone stimulus"/>
    <property type="evidence" value="ECO:0007669"/>
    <property type="project" value="Ensembl"/>
</dbReference>
<dbReference type="GO" id="GO:0007565">
    <property type="term" value="P:female pregnancy"/>
    <property type="evidence" value="ECO:0007669"/>
    <property type="project" value="Ensembl"/>
</dbReference>
<dbReference type="GO" id="GO:0001649">
    <property type="term" value="P:osteoblast differentiation"/>
    <property type="evidence" value="ECO:0007669"/>
    <property type="project" value="Ensembl"/>
</dbReference>
<dbReference type="GO" id="GO:0042104">
    <property type="term" value="P:positive regulation of activated T cell proliferation"/>
    <property type="evidence" value="ECO:0000250"/>
    <property type="project" value="UniProtKB"/>
</dbReference>
<dbReference type="GO" id="GO:0043567">
    <property type="term" value="P:regulation of insulin-like growth factor receptor signaling pathway"/>
    <property type="evidence" value="ECO:0000250"/>
    <property type="project" value="UniProtKB"/>
</dbReference>
<dbReference type="GO" id="GO:0032355">
    <property type="term" value="P:response to estradiol"/>
    <property type="evidence" value="ECO:0007669"/>
    <property type="project" value="Ensembl"/>
</dbReference>
<dbReference type="GO" id="GO:0043627">
    <property type="term" value="P:response to estrogen"/>
    <property type="evidence" value="ECO:0007669"/>
    <property type="project" value="Ensembl"/>
</dbReference>
<dbReference type="GO" id="GO:0051384">
    <property type="term" value="P:response to glucocorticoid"/>
    <property type="evidence" value="ECO:0007669"/>
    <property type="project" value="Ensembl"/>
</dbReference>
<dbReference type="GO" id="GO:0009612">
    <property type="term" value="P:response to mechanical stimulus"/>
    <property type="evidence" value="ECO:0007669"/>
    <property type="project" value="Ensembl"/>
</dbReference>
<dbReference type="GO" id="GO:0007584">
    <property type="term" value="P:response to nutrient"/>
    <property type="evidence" value="ECO:0007669"/>
    <property type="project" value="Ensembl"/>
</dbReference>
<dbReference type="GO" id="GO:0032526">
    <property type="term" value="P:response to retinoic acid"/>
    <property type="evidence" value="ECO:0007669"/>
    <property type="project" value="Ensembl"/>
</dbReference>
<dbReference type="GO" id="GO:0009410">
    <property type="term" value="P:response to xenobiotic stimulus"/>
    <property type="evidence" value="ECO:0007669"/>
    <property type="project" value="Ensembl"/>
</dbReference>
<dbReference type="CDD" id="cd00191">
    <property type="entry name" value="TY"/>
    <property type="match status" value="1"/>
</dbReference>
<dbReference type="FunFam" id="4.10.40.20:FF:000007">
    <property type="entry name" value="Insulin-like growth factor-binding protein 2"/>
    <property type="match status" value="1"/>
</dbReference>
<dbReference type="FunFam" id="4.10.800.10:FF:000002">
    <property type="entry name" value="Insulin-like growth factor-binding protein 2"/>
    <property type="match status" value="1"/>
</dbReference>
<dbReference type="Gene3D" id="4.10.40.20">
    <property type="match status" value="1"/>
</dbReference>
<dbReference type="Gene3D" id="4.10.800.10">
    <property type="entry name" value="Thyroglobulin type-1"/>
    <property type="match status" value="1"/>
</dbReference>
<dbReference type="InterPro" id="IPR009030">
    <property type="entry name" value="Growth_fac_rcpt_cys_sf"/>
</dbReference>
<dbReference type="InterPro" id="IPR012210">
    <property type="entry name" value="IGFBP-2"/>
</dbReference>
<dbReference type="InterPro" id="IPR000867">
    <property type="entry name" value="IGFBP-like"/>
</dbReference>
<dbReference type="InterPro" id="IPR022321">
    <property type="entry name" value="IGFBP_1-6_chordata"/>
</dbReference>
<dbReference type="InterPro" id="IPR017891">
    <property type="entry name" value="Insulin_GF-bd_Cys-rich_CS"/>
</dbReference>
<dbReference type="InterPro" id="IPR000716">
    <property type="entry name" value="Thyroglobulin_1"/>
</dbReference>
<dbReference type="InterPro" id="IPR036857">
    <property type="entry name" value="Thyroglobulin_1_sf"/>
</dbReference>
<dbReference type="PANTHER" id="PTHR11551">
    <property type="entry name" value="INSULIN-LIKE GROWTH FACTOR BINDING PROTEIN"/>
    <property type="match status" value="1"/>
</dbReference>
<dbReference type="PANTHER" id="PTHR11551:SF5">
    <property type="entry name" value="INSULIN-LIKE GROWTH FACTOR-BINDING PROTEIN 2"/>
    <property type="match status" value="1"/>
</dbReference>
<dbReference type="Pfam" id="PF00219">
    <property type="entry name" value="IGFBP"/>
    <property type="match status" value="1"/>
</dbReference>
<dbReference type="Pfam" id="PF00086">
    <property type="entry name" value="Thyroglobulin_1"/>
    <property type="match status" value="1"/>
</dbReference>
<dbReference type="PRINTS" id="PR01976">
    <property type="entry name" value="IGFBPFAMILY"/>
</dbReference>
<dbReference type="PRINTS" id="PR01978">
    <property type="entry name" value="IGFBPFAMILY2"/>
</dbReference>
<dbReference type="SMART" id="SM00121">
    <property type="entry name" value="IB"/>
    <property type="match status" value="1"/>
</dbReference>
<dbReference type="SMART" id="SM00211">
    <property type="entry name" value="TY"/>
    <property type="match status" value="1"/>
</dbReference>
<dbReference type="SUPFAM" id="SSF57184">
    <property type="entry name" value="Growth factor receptor domain"/>
    <property type="match status" value="1"/>
</dbReference>
<dbReference type="SUPFAM" id="SSF57610">
    <property type="entry name" value="Thyroglobulin type-1 domain"/>
    <property type="match status" value="1"/>
</dbReference>
<dbReference type="PROSITE" id="PS00222">
    <property type="entry name" value="IGFBP_N_1"/>
    <property type="match status" value="1"/>
</dbReference>
<dbReference type="PROSITE" id="PS51323">
    <property type="entry name" value="IGFBP_N_2"/>
    <property type="match status" value="1"/>
</dbReference>
<dbReference type="PROSITE" id="PS00484">
    <property type="entry name" value="THYROGLOBULIN_1_1"/>
    <property type="match status" value="1"/>
</dbReference>
<dbReference type="PROSITE" id="PS51162">
    <property type="entry name" value="THYROGLOBULIN_1_2"/>
    <property type="match status" value="1"/>
</dbReference>
<protein>
    <recommendedName>
        <fullName>Insulin-like growth factor-binding protein 2</fullName>
        <shortName>IBP-2</shortName>
        <shortName>IGF-binding protein 2</shortName>
        <shortName>IGFBP-2</shortName>
        <shortName>mIGFBP-2</shortName>
    </recommendedName>
</protein>
<feature type="signal peptide" evidence="1">
    <location>
        <begin position="1"/>
        <end position="34"/>
    </location>
</feature>
<feature type="chain" id="PRO_0000014371" description="Insulin-like growth factor-binding protein 2">
    <location>
        <begin position="35"/>
        <end position="305"/>
    </location>
</feature>
<feature type="domain" description="IGFBP N-terminal" evidence="4">
    <location>
        <begin position="36"/>
        <end position="118"/>
    </location>
</feature>
<feature type="domain" description="Thyroglobulin type-1" evidence="3">
    <location>
        <begin position="204"/>
        <end position="286"/>
    </location>
</feature>
<feature type="short sequence motif" description="Cell attachment site">
    <location>
        <begin position="281"/>
        <end position="283"/>
    </location>
</feature>
<feature type="disulfide bond" evidence="4">
    <location>
        <begin position="40"/>
        <end position="68"/>
    </location>
</feature>
<feature type="disulfide bond" evidence="4">
    <location>
        <begin position="43"/>
        <end position="70"/>
    </location>
</feature>
<feature type="disulfide bond" evidence="4">
    <location>
        <begin position="51"/>
        <end position="71"/>
    </location>
</feature>
<feature type="disulfide bond" evidence="4">
    <location>
        <begin position="59"/>
        <end position="74"/>
    </location>
</feature>
<feature type="disulfide bond" evidence="4">
    <location>
        <begin position="82"/>
        <end position="95"/>
    </location>
</feature>
<feature type="disulfide bond" evidence="4">
    <location>
        <begin position="89"/>
        <end position="115"/>
    </location>
</feature>
<feature type="disulfide bond" evidence="3">
    <location>
        <begin position="207"/>
        <end position="241"/>
    </location>
</feature>
<feature type="disulfide bond" evidence="3">
    <location>
        <begin position="252"/>
        <end position="263"/>
    </location>
</feature>
<feature type="disulfide bond" evidence="3">
    <location>
        <begin position="265"/>
        <end position="286"/>
    </location>
</feature>
<feature type="sequence conflict" description="In Ref. 2; CAA57270." evidence="8" ref="2">
    <original>R</original>
    <variation>A</variation>
    <location>
        <position position="47"/>
    </location>
</feature>
<feature type="sequence conflict" description="In Ref. 1; AAB60709." evidence="8" ref="1">
    <original>D</original>
    <variation>H</variation>
    <location>
        <position position="133"/>
    </location>
</feature>
<evidence type="ECO:0000250" key="1"/>
<evidence type="ECO:0000250" key="2">
    <source>
        <dbReference type="UniProtKB" id="P18065"/>
    </source>
</evidence>
<evidence type="ECO:0000255" key="3">
    <source>
        <dbReference type="PROSITE-ProRule" id="PRU00500"/>
    </source>
</evidence>
<evidence type="ECO:0000255" key="4">
    <source>
        <dbReference type="PROSITE-ProRule" id="PRU00653"/>
    </source>
</evidence>
<evidence type="ECO:0000269" key="5">
    <source>
    </source>
</evidence>
<evidence type="ECO:0000269" key="6">
    <source>
    </source>
</evidence>
<evidence type="ECO:0000269" key="7">
    <source>
    </source>
</evidence>
<evidence type="ECO:0000305" key="8"/>
<keyword id="KW-1015">Disulfide bond</keyword>
<keyword id="KW-0325">Glycoprotein</keyword>
<keyword id="KW-0340">Growth factor binding</keyword>
<keyword id="KW-0341">Growth regulation</keyword>
<keyword id="KW-1185">Reference proteome</keyword>
<keyword id="KW-0964">Secreted</keyword>
<keyword id="KW-0732">Signal</keyword>
<gene>
    <name type="primary">Igfbp2</name>
    <name type="synonym">Igfbp-2</name>
</gene>
<reference key="1">
    <citation type="journal article" date="1993" name="Gene">
        <title>Cloning and characterization of the gene encoding murine insulin-like growth factor-binding protein-2, mIGFBP-2.</title>
        <authorList>
            <person name="Landwehr J."/>
            <person name="Kaupmann K."/>
            <person name="Heinrich G."/>
            <person name="Schwander J."/>
        </authorList>
    </citation>
    <scope>NUCLEOTIDE SEQUENCE [GENOMIC DNA]</scope>
    <source>
        <strain>BALB/cJ</strain>
        <tissue>Fetal liver</tissue>
    </source>
</reference>
<reference key="2">
    <citation type="journal article" date="1994" name="Mol. Cell. Endocrinol.">
        <title>cDNA cloning and mRNA expression of the six mouse insulin-like growth factor binding proteins.</title>
        <authorList>
            <person name="Schuller A.G.P."/>
            <person name="Groffen C."/>
            <person name="van Neck J.W."/>
            <person name="Zwarthoff E.C."/>
            <person name="Drop S.L.S."/>
        </authorList>
    </citation>
    <scope>NUCLEOTIDE SEQUENCE [MRNA]</scope>
    <scope>TISSUE SPECIFICITY</scope>
    <scope>DEVELOPMENTAL STAGE</scope>
    <source>
        <tissue>Liver</tissue>
    </source>
</reference>
<reference key="3">
    <citation type="submission" date="2005-07" db="EMBL/GenBank/DDBJ databases">
        <authorList>
            <person name="Mural R.J."/>
            <person name="Adams M.D."/>
            <person name="Myers E.W."/>
            <person name="Smith H.O."/>
            <person name="Venter J.C."/>
        </authorList>
    </citation>
    <scope>NUCLEOTIDE SEQUENCE [LARGE SCALE GENOMIC DNA]</scope>
</reference>
<reference key="4">
    <citation type="journal article" date="2004" name="Genome Res.">
        <title>The status, quality, and expansion of the NIH full-length cDNA project: the Mammalian Gene Collection (MGC).</title>
        <authorList>
            <consortium name="The MGC Project Team"/>
        </authorList>
    </citation>
    <scope>NUCLEOTIDE SEQUENCE [LARGE SCALE MRNA]</scope>
    <source>
        <strain>FVB/N-3</strain>
        <tissue>Mammary gland</tissue>
    </source>
</reference>
<reference key="5">
    <citation type="journal article" date="2008" name="Endocrinology">
        <title>Gender-specific changes in bone turnover and skeletal architecture in igfbp-2-null mice.</title>
        <authorList>
            <person name="DeMambro V.E."/>
            <person name="Clemmons D.R."/>
            <person name="Horton L.G."/>
            <person name="Bouxsein M.L."/>
            <person name="Wood T.L."/>
            <person name="Beamer W.G."/>
            <person name="Canalis E."/>
            <person name="Rosen C.J."/>
        </authorList>
    </citation>
    <scope>FUNCTION</scope>
    <scope>DISRUPTION PHENOTYPE</scope>
</reference>
<reference key="6">
    <citation type="journal article" date="2016" name="J. Bone Miner. Res.">
        <title>IRS-1 Functions as a Molecular Scaffold to Coordinate IGF-I/IGFBP-2 Signaling During Osteoblast Differentiation.</title>
        <authorList>
            <person name="Xi G."/>
            <person name="Shen X."/>
            <person name="Rosen C.J."/>
            <person name="Clemmons D.R."/>
        </authorList>
    </citation>
    <scope>FUNCTION</scope>
    <scope>INTERACTION WITH PTPRB</scope>
</reference>
<organism>
    <name type="scientific">Mus musculus</name>
    <name type="common">Mouse</name>
    <dbReference type="NCBI Taxonomy" id="10090"/>
    <lineage>
        <taxon>Eukaryota</taxon>
        <taxon>Metazoa</taxon>
        <taxon>Chordata</taxon>
        <taxon>Craniata</taxon>
        <taxon>Vertebrata</taxon>
        <taxon>Euteleostomi</taxon>
        <taxon>Mammalia</taxon>
        <taxon>Eutheria</taxon>
        <taxon>Euarchontoglires</taxon>
        <taxon>Glires</taxon>
        <taxon>Rodentia</taxon>
        <taxon>Myomorpha</taxon>
        <taxon>Muroidea</taxon>
        <taxon>Muridae</taxon>
        <taxon>Murinae</taxon>
        <taxon>Mus</taxon>
        <taxon>Mus</taxon>
    </lineage>
</organism>
<name>IBP2_MOUSE</name>
<accession>P47877</accession>
<accession>Q61722</accession>
<accession>Q91VK7</accession>
<proteinExistence type="evidence at protein level"/>